<comment type="function">
    <text evidence="1">FMRFamides and FMRFamide-like peptides are neuropeptides.</text>
</comment>
<comment type="subcellular location">
    <subcellularLocation>
        <location evidence="6">Secreted</location>
    </subcellularLocation>
</comment>
<comment type="similarity">
    <text evidence="2">Belongs to the FARP (FMRF amide related peptide) family.</text>
</comment>
<keyword id="KW-0027">Amidation</keyword>
<keyword id="KW-0903">Direct protein sequencing</keyword>
<keyword id="KW-0527">Neuropeptide</keyword>
<keyword id="KW-0964">Secreted</keyword>
<sequence length="8" mass="1034">TDRNFLRL</sequence>
<organism>
    <name type="scientific">Austrophasma gansbaaiense</name>
    <name type="common">Gladiator</name>
    <name type="synonym">Heel-walker</name>
    <dbReference type="NCBI Taxonomy" id="253136"/>
    <lineage>
        <taxon>Eukaryota</taxon>
        <taxon>Metazoa</taxon>
        <taxon>Ecdysozoa</taxon>
        <taxon>Arthropoda</taxon>
        <taxon>Hexapoda</taxon>
        <taxon>Insecta</taxon>
        <taxon>Pterygota</taxon>
        <taxon>Neoptera</taxon>
        <taxon>Polyneoptera</taxon>
        <taxon>Mantophasmatodea</taxon>
        <taxon>Austrophasmatidae</taxon>
        <taxon>Austrophasma</taxon>
    </lineage>
</organism>
<evidence type="ECO:0000250" key="1">
    <source>
        <dbReference type="UniProtKB" id="P34405"/>
    </source>
</evidence>
<evidence type="ECO:0000255" key="2"/>
<evidence type="ECO:0000269" key="3">
    <source>
    </source>
</evidence>
<evidence type="ECO:0000303" key="4">
    <source>
    </source>
</evidence>
<evidence type="ECO:0000305" key="5"/>
<evidence type="ECO:0000305" key="6">
    <source>
    </source>
</evidence>
<accession>B3A0E3</accession>
<name>FAR5_AUSGA</name>
<reference evidence="5" key="1">
    <citation type="journal article" date="2012" name="Syst. Biol.">
        <title>Peptidomics-based phylogeny and biogeography of Mantophasmatodea (Hexapoda).</title>
        <authorList>
            <person name="Predel R."/>
            <person name="Neupert S."/>
            <person name="Huetteroth W."/>
            <person name="Kahnt J."/>
            <person name="Waidelich D."/>
            <person name="Roth S."/>
        </authorList>
    </citation>
    <scope>PROTEIN SEQUENCE</scope>
    <scope>AMIDATION AT LEU-8</scope>
    <source>
        <tissue evidence="3">Thoracic perisympathetic organs</tissue>
    </source>
</reference>
<dbReference type="GO" id="GO:0005576">
    <property type="term" value="C:extracellular region"/>
    <property type="evidence" value="ECO:0007669"/>
    <property type="project" value="UniProtKB-SubCell"/>
</dbReference>
<dbReference type="GO" id="GO:0007218">
    <property type="term" value="P:neuropeptide signaling pathway"/>
    <property type="evidence" value="ECO:0007669"/>
    <property type="project" value="UniProtKB-KW"/>
</dbReference>
<protein>
    <recommendedName>
        <fullName evidence="4">Extended FMRFamide-5</fullName>
        <shortName evidence="4">FMRFa-5</shortName>
    </recommendedName>
</protein>
<proteinExistence type="evidence at protein level"/>
<feature type="peptide" id="PRO_0000421511" description="Extended FMRFamide-5" evidence="3">
    <location>
        <begin position="1"/>
        <end position="8"/>
    </location>
</feature>
<feature type="modified residue" description="Leucine amide" evidence="3">
    <location>
        <position position="8"/>
    </location>
</feature>
<feature type="unsure residue" description="L or I" evidence="3">
    <location>
        <position position="6"/>
    </location>
</feature>
<feature type="unsure residue" description="L or I" evidence="3">
    <location>
        <position position="8"/>
    </location>
</feature>